<protein>
    <recommendedName>
        <fullName evidence="4">Endoplasmic reticulum chaperone BiP</fullName>
        <ecNumber evidence="4">3.6.4.10</ecNumber>
    </recommendedName>
    <alternativeName>
        <fullName evidence="4">78 kDa glucose-regulated protein</fullName>
        <shortName evidence="4">GRP-78</shortName>
    </alternativeName>
    <alternativeName>
        <fullName evidence="4">Binding-immunoglobulin protein</fullName>
        <shortName evidence="4">BiP</shortName>
    </alternativeName>
    <alternativeName>
        <fullName evidence="4">Heat shock protein 70 family protein 5</fullName>
        <shortName evidence="4">HSP70 family protein 5</shortName>
    </alternativeName>
    <alternativeName>
        <fullName evidence="4">Heat shock protein family A member 5</fullName>
    </alternativeName>
    <alternativeName>
        <fullName evidence="4">Immunoglobulin heavy chain-binding protein</fullName>
    </alternativeName>
    <alternativeName>
        <fullName evidence="9">Steroidogenesis-activator polypeptide</fullName>
    </alternativeName>
</protein>
<comment type="function">
    <text evidence="2 4 5">Endoplasmic reticulum chaperone that plays a key role in protein folding and quality control in the endoplasmic reticulum lumen (By similarity). Involved in the correct folding of proteins and degradation of misfolded proteins via its interaction with DNAJC10/ERdj5, probably to facilitate the release of DNAJC10/ERdj5 from its substrate (By similarity). Acts as a key repressor of the EIF2AK3/PERK and ERN1/IRE1-mediated unfolded protein response (UPR). In the unstressed endoplasmic reticulum, recruited by DNAJB9/ERdj4 to the luminal region of ERN1/IRE1, leading to disrupt the dimerization of ERN1/IRE1, thereby inactivating ERN1/IRE1. Also binds and inactivates EIF2AK3/PERK in unstressed cells. Accumulation of misfolded protein in the endoplasmic reticulum causes release of HSPA5/BiP from ERN1/IRE1 and EIF2AK3/PERK, allowing their homodimerization and subsequent activation (By similarity). Plays an auxiliary role in post-translational transport of small presecretory proteins across endoplasmic reticulum (ER). May function as an allosteric modulator for SEC61 channel-forming translocon complex, likely cooperating with SEC62 to enable the productive insertion of these precursors into SEC61 channel. Appears to specifically regulate translocation of precursors having inhibitory residues in their mature region that weaken channel gating. May also play a role in apoptosis and cell proliferation (By similarity).</text>
</comment>
<comment type="catalytic activity">
    <reaction evidence="2">
        <text>ATP + H2O = ADP + phosphate + H(+)</text>
        <dbReference type="Rhea" id="RHEA:13065"/>
        <dbReference type="ChEBI" id="CHEBI:15377"/>
        <dbReference type="ChEBI" id="CHEBI:15378"/>
        <dbReference type="ChEBI" id="CHEBI:30616"/>
        <dbReference type="ChEBI" id="CHEBI:43474"/>
        <dbReference type="ChEBI" id="CHEBI:456216"/>
        <dbReference type="EC" id="3.6.4.10"/>
    </reaction>
</comment>
<comment type="activity regulation">
    <text evidence="2 4">The chaperone activity is regulated by ATP-induced allosteric coupling of the nucleotide-binding (NBD) and substrate-binding (SBD) domains (By similarity). In the ADP-bound and nucleotide-free (apo) states, the two domains have little interaction (By similarity). In contrast, in the ATP-bound state the two domains are tightly coupled, which results in drastically accelerated kinetics in both binding and release of polypeptide substrates (By similarity). J domain-containing co-chaperones (DNAJB9/ERdj4 or DNAJC10/ERdj5) stimulate the ATPase activity and are required for efficient substrate recognition by HSPA5/BiP. Homooligomerization inactivates participating HSPA5/BiP protomers and probably act as reservoirs to store HSPA5/BiP molecules when they are not needed by the cell (By similarity).</text>
</comment>
<comment type="subunit">
    <text evidence="2 4 5 7 8">Monomer and homooligomer; homooligomerization via the interdomain linker inactivates the chaperone activity and acts as a storage of HSPA5/BiP molecules (By similarity). Interacts with DNAJC1 (via J domain) (By similarity). Component of an EIF2 complex at least composed of CELF1/CUGBP1, CALR, CALR3, EIF2S1, EIF2S2, HSP90B1 and HSPA5 (By similarity). Part of a large chaperone multiprotein complex comprising DNAJB11, HSP90B1, HSPA5, HYOU, PDIA2, PDIA4, PDIA6, PPIB, SDF2L1, UGGT1 and very small amounts of ERP29, but not, or at very low levels, CALR nor CANX (PubMed:12475965). Interacts with TMEM132A and TRIM21 (PubMed:12514190). May form a complex with ERLEC1, OS9, SEL1L and SYVN1 (By similarity). Interacts with DNAJC10 (By similarity). Interacts with DNAJB9/ERdj4; leading to recruit HSPA5/BiP to ERN1/IRE1 (By similarity). Interacts with ERN1/IRE1 (via luminal domain); the interaction takes place following interaction with DNAJB9/ERdj4 and leads to inactivate ERN1/IRE1, the interaction also competitively inhibits ERN1 interaction with MANF (By similarity). Interacts directly with MANF (via SAP domain); the interaction inhibits ATP binding to HSPA5/BiP and subsequent nucleotide exchange (By similarity). Interacts with EIF2AK3/PERK (via luminal domain); interaction leads to inactivate EIF2AK3/PERK (By similarity). Interacts with MX1 (By similarity). Interacts with METTL23 (By similarity). Interacts with CEMIP; the interaction induces calcium leakage from the endoplasmic reticulum and cell migration (By similarity). Interacts with PCSK4 form; the interaction takes place in the endoplasmic reticulum (By similarity). Interacts with CIPC (By similarity). Interacts with CCDC88B (via C-terminus); the interaction opposes ERN1-mediated JNK activation, protecting against apoptosis (By similarity). Interacts with INPP5K; necessary for INPP5K localization at the endoplasmic reticulum (By similarity). Interacts with MANF; the interaction is direct (By similarity). Interacts with LOXL2; leading to activate the ERN1/IRE1-XBP1 pathway of the unfolded protein response (By similarity). Interacts with CLU under stressed condition; interaction increases CLU protein stability; facilitates its retrotranslocation and redistribution to the mitochondria; cooperatively suppress stress-induced apoptosis by stabilizing mitochondrial membrane integrity (By similarity). Interacts with CCDC47 (By similarity). Interacts with CLN3 (By similarity). Interacts with ELAPOR1; may regulate the function of HSPA5 in apoptosis and cell proliferation. Interacts with CASP7 (By similarity). Interacts with ILDR2; the interaction stabilizes ILDR2 expression (By similarity). Interacts with ADAM7 (By similarity).</text>
</comment>
<comment type="interaction">
    <interactant intactId="EBI-916036">
        <id>P06761</id>
    </interactant>
    <interactant intactId="EBI-1557826">
        <id>Q9R0C9</id>
        <label>Sigmar1</label>
    </interactant>
    <organismsDiffer>false</organismsDiffer>
    <experiments>3</experiments>
</comment>
<comment type="interaction">
    <interactant intactId="EBI-916036">
        <id>P06761</id>
    </interactant>
    <interactant intactId="EBI-1549657">
        <id>P06882</id>
        <label>Tg</label>
    </interactant>
    <organismsDiffer>false</organismsDiffer>
    <experiments>6</experiments>
</comment>
<comment type="subcellular location">
    <subcellularLocation>
        <location evidence="4">Endoplasmic reticulum lumen</location>
    </subcellularLocation>
    <subcellularLocation>
        <location evidence="4">Melanosome</location>
    </subcellularLocation>
    <subcellularLocation>
        <location evidence="5">Cytoplasm</location>
    </subcellularLocation>
    <subcellularLocation>
        <location>Cell surface</location>
    </subcellularLocation>
    <text evidence="4">Identified by mass spectrometry in melanosome fractions from stage I to stage IV (By similarity). Localizes to the cell surface in epithelial cells; high levels of free iron promotes cell surface localization (By similarity).</text>
</comment>
<comment type="domain">
    <text evidence="2">The interdomain linker regulates the chaperone activity by mediating the formation of homooligomers. Homooligomers are formed by engagement of the interdomain linker of one HSPA5/BiP molecule as a typical substrate of an adjacent HSPA5/BiP molecule. HSPA5/BiP oligomerization inactivates participating HSPA5/BiP protomers. HSPA5/BiP oligomers probably act as reservoirs to store HSPA5/BiP molecules when they are not needed by the cell. When the levels of unfolded proteins rise, cells can rapidly break up these oligomers to make active monomers.</text>
</comment>
<comment type="PTM">
    <text evidence="2">In unstressed cells, AMPylation at Thr-518 by FICD inactivates the chaperome activity: AMPylated form is locked in a relatively inert state and only weakly stimulated by J domain-containing proteins. In response to endoplasmic reticulum stress, de-AMPylation by the same protein, FICD, restores the chaperone activity.</text>
</comment>
<comment type="similarity">
    <text evidence="10">Belongs to the heat shock protein 70 family.</text>
</comment>
<accession>P06761</accession>
<feature type="signal peptide" evidence="1">
    <location>
        <begin position="1"/>
        <end position="18"/>
    </location>
</feature>
<feature type="chain" id="PRO_0000013569" description="Endoplasmic reticulum chaperone BiP">
    <location>
        <begin position="19"/>
        <end position="654"/>
    </location>
</feature>
<feature type="region of interest" description="Required for interaction with ELAPOR1" evidence="4">
    <location>
        <begin position="1"/>
        <end position="80"/>
    </location>
</feature>
<feature type="region of interest" description="Nucleotide-binding (NBD)" evidence="4">
    <location>
        <begin position="125"/>
        <end position="280"/>
    </location>
</feature>
<feature type="region of interest" description="Interdomain linker" evidence="2">
    <location>
        <begin position="409"/>
        <end position="419"/>
    </location>
</feature>
<feature type="region of interest" description="Substrate-binding (SBD)" evidence="4">
    <location>
        <begin position="420"/>
        <end position="500"/>
    </location>
</feature>
<feature type="region of interest" description="Disordered" evidence="6">
    <location>
        <begin position="631"/>
        <end position="654"/>
    </location>
</feature>
<feature type="short sequence motif" description="Prevents secretion from ER">
    <location>
        <begin position="651"/>
        <end position="654"/>
    </location>
</feature>
<feature type="compositionally biased region" description="Acidic residues" evidence="6">
    <location>
        <begin position="644"/>
        <end position="654"/>
    </location>
</feature>
<feature type="binding site" evidence="4">
    <location>
        <begin position="36"/>
        <end position="39"/>
    </location>
    <ligand>
        <name>ATP</name>
        <dbReference type="ChEBI" id="CHEBI:30616"/>
    </ligand>
</feature>
<feature type="binding site" evidence="4">
    <location>
        <position position="96"/>
    </location>
    <ligand>
        <name>ATP</name>
        <dbReference type="ChEBI" id="CHEBI:30616"/>
    </ligand>
</feature>
<feature type="binding site" evidence="4">
    <location>
        <begin position="227"/>
        <end position="229"/>
    </location>
    <ligand>
        <name>ATP</name>
        <dbReference type="ChEBI" id="CHEBI:30616"/>
    </ligand>
</feature>
<feature type="binding site" evidence="4">
    <location>
        <begin position="293"/>
        <end position="300"/>
    </location>
    <ligand>
        <name>ATP</name>
        <dbReference type="ChEBI" id="CHEBI:30616"/>
    </ligand>
</feature>
<feature type="binding site" evidence="4">
    <location>
        <begin position="364"/>
        <end position="367"/>
    </location>
    <ligand>
        <name>ATP</name>
        <dbReference type="ChEBI" id="CHEBI:30616"/>
    </ligand>
</feature>
<feature type="modified residue" description="Phosphoserine" evidence="12">
    <location>
        <position position="86"/>
    </location>
</feature>
<feature type="modified residue" description="N6-acetyllysine" evidence="5">
    <location>
        <position position="125"/>
    </location>
</feature>
<feature type="modified residue" description="3'-nitrotyrosine" evidence="5">
    <location>
        <position position="160"/>
    </location>
</feature>
<feature type="modified residue" description="N6-acetyllysine" evidence="5">
    <location>
        <position position="213"/>
    </location>
</feature>
<feature type="modified residue" description="N6-acetyllysine" evidence="3">
    <location>
        <position position="271"/>
    </location>
</feature>
<feature type="modified residue" description="N6-acetyllysine" evidence="5">
    <location>
        <position position="326"/>
    </location>
</feature>
<feature type="modified residue" description="N6-acetyllysine; alternate" evidence="5">
    <location>
        <position position="353"/>
    </location>
</feature>
<feature type="modified residue" description="N6-succinyllysine" evidence="5">
    <location>
        <position position="447"/>
    </location>
</feature>
<feature type="modified residue" description="Omega-N-methylarginine" evidence="3">
    <location>
        <position position="492"/>
    </location>
</feature>
<feature type="modified residue" description="O-AMP-threonine; alternate" evidence="2">
    <location>
        <position position="518"/>
    </location>
</feature>
<feature type="modified residue" description="Phosphothreonine; alternate" evidence="4">
    <location>
        <position position="518"/>
    </location>
</feature>
<feature type="modified residue" description="N6,N6,N6-trimethyllysine; by METTL21A; in vitro" evidence="3">
    <location>
        <position position="585"/>
    </location>
</feature>
<feature type="modified residue" description="N6,N6-dimethyllysine; alternate" evidence="4">
    <location>
        <position position="585"/>
    </location>
</feature>
<feature type="modified residue" description="N6-methyllysine; alternate" evidence="4">
    <location>
        <position position="585"/>
    </location>
</feature>
<feature type="modified residue" description="N6-methyllysine" evidence="4">
    <location>
        <position position="591"/>
    </location>
</feature>
<feature type="modified residue" description="Phosphothreonine" evidence="5">
    <location>
        <position position="643"/>
    </location>
</feature>
<feature type="modified residue" description="Phosphothreonine" evidence="12">
    <location>
        <position position="648"/>
    </location>
</feature>
<feature type="modified residue" description="Phosphoserine" evidence="12">
    <location>
        <position position="649"/>
    </location>
</feature>
<feature type="cross-link" description="Glycyl lysine isopeptide (Lys-Gly) (interchain with G-Cter in SUMO2)" evidence="4">
    <location>
        <position position="352"/>
    </location>
</feature>
<feature type="cross-link" description="Glycyl lysine isopeptide (Lys-Gly) (interchain with G-Cter in SUMO1); alternate" evidence="4">
    <location>
        <position position="353"/>
    </location>
</feature>
<feature type="sequence conflict" description="In Ref. 3; AAA41277." evidence="10" ref="3">
    <original>T</original>
    <variation>M</variation>
    <location>
        <position position="29"/>
    </location>
</feature>
<feature type="sequence conflict" description="In Ref. 5; AA sequence." evidence="10" ref="5">
    <original>S</original>
    <variation>D</variation>
    <location>
        <position position="649"/>
    </location>
</feature>
<feature type="sequence conflict" description="In Ref. 5; AA sequence." evidence="10" ref="5">
    <original>K</original>
    <variation>KK</variation>
    <location>
        <position position="651"/>
    </location>
</feature>
<reference key="1">
    <citation type="journal article" date="1986" name="Cell">
        <title>An Hsp70-like protein in the ER: identity with the 78 kd glucose-regulated protein and immunoglobulin heavy chain binding protein.</title>
        <authorList>
            <person name="Munro S."/>
            <person name="Pelham H.R.B."/>
        </authorList>
    </citation>
    <scope>NUCLEOTIDE SEQUENCE [MRNA]</scope>
</reference>
<reference key="2">
    <citation type="journal article" date="2004" name="Genome Res.">
        <title>The status, quality, and expansion of the NIH full-length cDNA project: the Mammalian Gene Collection (MGC).</title>
        <authorList>
            <consortium name="The MGC Project Team"/>
        </authorList>
    </citation>
    <scope>NUCLEOTIDE SEQUENCE [LARGE SCALE MRNA]</scope>
    <source>
        <tissue>Prostate</tissue>
    </source>
</reference>
<reference key="3">
    <citation type="journal article" date="1987" name="Proc. Natl. Acad. Sci. U.S.A.">
        <title>Rat gene encoding the 78-kDa glucose-regulated protein GRP78: its regulatory sequences and the effect of protein glycosylation on its expression.</title>
        <authorList>
            <person name="Chang S.C."/>
            <person name="Wooden S.K."/>
            <person name="Nakaki T."/>
            <person name="Kim Y.K."/>
            <person name="Lin A.Y."/>
            <person name="Kung L."/>
            <person name="Attenello J.W."/>
            <person name="Lee A.S."/>
        </authorList>
    </citation>
    <scope>NUCLEOTIDE SEQUENCE [GENOMIC DNA] OF 1-40</scope>
</reference>
<reference key="4">
    <citation type="submission" date="2007-07" db="UniProtKB">
        <authorList>
            <person name="Lubec G."/>
            <person name="Afjehi-Sadat L."/>
            <person name="Chen W.-Q."/>
            <person name="Kang S.U."/>
        </authorList>
    </citation>
    <scope>PROTEIN SEQUENCE OF 50-60; 165-181; 307-324; 475-492 AND 533-540</scope>
    <scope>IDENTIFICATION BY MASS SPECTROMETRY</scope>
    <source>
        <strain>Sprague-Dawley</strain>
        <tissue>Brain</tissue>
        <tissue>Hippocampus</tissue>
        <tissue>Spinal cord</tissue>
    </source>
</reference>
<reference key="5">
    <citation type="journal article" date="1987" name="Science">
        <title>Steroidogenesis-activator polypeptide isolated from a rat Leydig cell tumor.</title>
        <authorList>
            <person name="Pedersen R.C."/>
            <person name="Brownie A.C."/>
        </authorList>
    </citation>
    <scope>PROTEIN SEQUENCE OF 626-654</scope>
</reference>
<reference key="6">
    <citation type="journal article" date="2002" name="Mol. Biol. Cell">
        <title>A subset of chaperones and folding enzymes form multiprotein complexes in endoplasmic reticulum to bind nascent proteins.</title>
        <authorList>
            <person name="Meunier L."/>
            <person name="Usherwood Y.-K."/>
            <person name="Chung K.T."/>
            <person name="Hendershot L.M."/>
        </authorList>
    </citation>
    <scope>COMPONENT OF A CHAPERONE COMPLEX</scope>
</reference>
<reference key="7">
    <citation type="journal article" date="2003" name="J. Biol. Chem.">
        <title>Cloning and characterization of a novel GRP78-binding protein in the rat brain.</title>
        <authorList>
            <person name="Oh-hashi K."/>
            <person name="Naruse Y."/>
            <person name="Amaya F."/>
            <person name="Shimosato G."/>
            <person name="Tanaka M."/>
        </authorList>
    </citation>
    <scope>INTERACTION WITH TMEM132A</scope>
    <source>
        <strain>Sprague-Dawley</strain>
    </source>
</reference>
<reference key="8">
    <citation type="journal article" date="2012" name="Nat. Commun.">
        <title>Quantitative maps of protein phosphorylation sites across 14 different rat organs and tissues.</title>
        <authorList>
            <person name="Lundby A."/>
            <person name="Secher A."/>
            <person name="Lage K."/>
            <person name="Nordsborg N.B."/>
            <person name="Dmytriyev A."/>
            <person name="Lundby C."/>
            <person name="Olsen J.V."/>
        </authorList>
    </citation>
    <scope>PHOSPHORYLATION [LARGE SCALE ANALYSIS] AT SER-86; THR-648 AND SER-649</scope>
    <scope>IDENTIFICATION BY MASS SPECTROMETRY [LARGE SCALE ANALYSIS]</scope>
</reference>
<organism>
    <name type="scientific">Rattus norvegicus</name>
    <name type="common">Rat</name>
    <dbReference type="NCBI Taxonomy" id="10116"/>
    <lineage>
        <taxon>Eukaryota</taxon>
        <taxon>Metazoa</taxon>
        <taxon>Chordata</taxon>
        <taxon>Craniata</taxon>
        <taxon>Vertebrata</taxon>
        <taxon>Euteleostomi</taxon>
        <taxon>Mammalia</taxon>
        <taxon>Eutheria</taxon>
        <taxon>Euarchontoglires</taxon>
        <taxon>Glires</taxon>
        <taxon>Rodentia</taxon>
        <taxon>Myomorpha</taxon>
        <taxon>Muroidea</taxon>
        <taxon>Muridae</taxon>
        <taxon>Murinae</taxon>
        <taxon>Rattus</taxon>
    </lineage>
</organism>
<name>BIP_RAT</name>
<dbReference type="EC" id="3.6.4.10" evidence="4"/>
<dbReference type="EMBL" id="M14050">
    <property type="protein sequence ID" value="AAA40817.1"/>
    <property type="molecule type" value="mRNA"/>
</dbReference>
<dbReference type="EMBL" id="BC062017">
    <property type="protein sequence ID" value="AAH62017.1"/>
    <property type="molecule type" value="mRNA"/>
</dbReference>
<dbReference type="EMBL" id="M14866">
    <property type="protein sequence ID" value="AAA41277.1"/>
    <property type="molecule type" value="Genomic_DNA"/>
</dbReference>
<dbReference type="PIR" id="A23948">
    <property type="entry name" value="HHRTGB"/>
</dbReference>
<dbReference type="RefSeq" id="NP_037215.1">
    <property type="nucleotide sequence ID" value="NM_013083.2"/>
</dbReference>
<dbReference type="SMR" id="P06761"/>
<dbReference type="BioGRID" id="247646">
    <property type="interactions" value="14"/>
</dbReference>
<dbReference type="CORUM" id="P06761"/>
<dbReference type="FunCoup" id="P06761">
    <property type="interactions" value="3086"/>
</dbReference>
<dbReference type="IntAct" id="P06761">
    <property type="interactions" value="21"/>
</dbReference>
<dbReference type="MINT" id="P06761"/>
<dbReference type="STRING" id="10116.ENSRNOP00000025064"/>
<dbReference type="CarbonylDB" id="P06761"/>
<dbReference type="GlyGen" id="P06761">
    <property type="glycosylation" value="1 site, 1 O-linked glycan (1 site)"/>
</dbReference>
<dbReference type="iPTMnet" id="P06761"/>
<dbReference type="PhosphoSitePlus" id="P06761"/>
<dbReference type="SwissPalm" id="P06761"/>
<dbReference type="jPOST" id="P06761"/>
<dbReference type="PaxDb" id="10116-ENSRNOP00000025064"/>
<dbReference type="GeneID" id="25617"/>
<dbReference type="KEGG" id="rno:25617"/>
<dbReference type="UCSC" id="RGD:2843">
    <property type="organism name" value="rat"/>
</dbReference>
<dbReference type="AGR" id="RGD:2843"/>
<dbReference type="CTD" id="3309"/>
<dbReference type="RGD" id="2843">
    <property type="gene designation" value="Hspa5"/>
</dbReference>
<dbReference type="VEuPathDB" id="HostDB:ENSRNOG00000018294"/>
<dbReference type="eggNOG" id="KOG0100">
    <property type="taxonomic scope" value="Eukaryota"/>
</dbReference>
<dbReference type="HOGENOM" id="CLU_005965_3_0_1"/>
<dbReference type="InParanoid" id="P06761"/>
<dbReference type="OMA" id="VQRDIKH"/>
<dbReference type="OrthoDB" id="31403at9989"/>
<dbReference type="PhylomeDB" id="P06761"/>
<dbReference type="TreeFam" id="TF105044"/>
<dbReference type="Reactome" id="R-RNO-3371453">
    <property type="pathway name" value="Regulation of HSF1-mediated heat shock response"/>
</dbReference>
<dbReference type="Reactome" id="R-RNO-983170">
    <property type="pathway name" value="Antigen Presentation: Folding, assembly and peptide loading of class I MHC"/>
</dbReference>
<dbReference type="PRO" id="PR:P06761"/>
<dbReference type="Proteomes" id="UP000002494">
    <property type="component" value="Chromosome 3"/>
</dbReference>
<dbReference type="Bgee" id="ENSRNOG00000018294">
    <property type="expression patterns" value="Expressed in ovary and 20 other cell types or tissues"/>
</dbReference>
<dbReference type="GO" id="GO:0009986">
    <property type="term" value="C:cell surface"/>
    <property type="evidence" value="ECO:0000266"/>
    <property type="project" value="RGD"/>
</dbReference>
<dbReference type="GO" id="GO:0008180">
    <property type="term" value="C:COP9 signalosome"/>
    <property type="evidence" value="ECO:0000266"/>
    <property type="project" value="RGD"/>
</dbReference>
<dbReference type="GO" id="GO:0005737">
    <property type="term" value="C:cytoplasm"/>
    <property type="evidence" value="ECO:0000266"/>
    <property type="project" value="RGD"/>
</dbReference>
<dbReference type="GO" id="GO:0005829">
    <property type="term" value="C:cytosol"/>
    <property type="evidence" value="ECO:0000250"/>
    <property type="project" value="UniProtKB"/>
</dbReference>
<dbReference type="GO" id="GO:0043198">
    <property type="term" value="C:dendritic shaft"/>
    <property type="evidence" value="ECO:0000314"/>
    <property type="project" value="RGD"/>
</dbReference>
<dbReference type="GO" id="GO:0005783">
    <property type="term" value="C:endoplasmic reticulum"/>
    <property type="evidence" value="ECO:0000314"/>
    <property type="project" value="MGI"/>
</dbReference>
<dbReference type="GO" id="GO:0034663">
    <property type="term" value="C:endoplasmic reticulum chaperone complex"/>
    <property type="evidence" value="ECO:0000266"/>
    <property type="project" value="RGD"/>
</dbReference>
<dbReference type="GO" id="GO:0005788">
    <property type="term" value="C:endoplasmic reticulum lumen"/>
    <property type="evidence" value="ECO:0000266"/>
    <property type="project" value="RGD"/>
</dbReference>
<dbReference type="GO" id="GO:0005789">
    <property type="term" value="C:endoplasmic reticulum membrane"/>
    <property type="evidence" value="ECO:0000266"/>
    <property type="project" value="RGD"/>
</dbReference>
<dbReference type="GO" id="GO:0005793">
    <property type="term" value="C:endoplasmic reticulum-Golgi intermediate compartment"/>
    <property type="evidence" value="ECO:0000266"/>
    <property type="project" value="RGD"/>
</dbReference>
<dbReference type="GO" id="GO:0043231">
    <property type="term" value="C:intracellular membrane-bounded organelle"/>
    <property type="evidence" value="ECO:0000266"/>
    <property type="project" value="RGD"/>
</dbReference>
<dbReference type="GO" id="GO:0042470">
    <property type="term" value="C:melanosome"/>
    <property type="evidence" value="ECO:0007669"/>
    <property type="project" value="UniProtKB-SubCell"/>
</dbReference>
<dbReference type="GO" id="GO:0016020">
    <property type="term" value="C:membrane"/>
    <property type="evidence" value="ECO:0000314"/>
    <property type="project" value="MGI"/>
</dbReference>
<dbReference type="GO" id="GO:0030496">
    <property type="term" value="C:midbody"/>
    <property type="evidence" value="ECO:0000266"/>
    <property type="project" value="RGD"/>
</dbReference>
<dbReference type="GO" id="GO:0005739">
    <property type="term" value="C:mitochondrion"/>
    <property type="evidence" value="ECO:0000266"/>
    <property type="project" value="RGD"/>
</dbReference>
<dbReference type="GO" id="GO:0043025">
    <property type="term" value="C:neuronal cell body"/>
    <property type="evidence" value="ECO:0000314"/>
    <property type="project" value="RGD"/>
</dbReference>
<dbReference type="GO" id="GO:0005634">
    <property type="term" value="C:nucleus"/>
    <property type="evidence" value="ECO:0000266"/>
    <property type="project" value="RGD"/>
</dbReference>
<dbReference type="GO" id="GO:0005886">
    <property type="term" value="C:plasma membrane"/>
    <property type="evidence" value="ECO:0000266"/>
    <property type="project" value="RGD"/>
</dbReference>
<dbReference type="GO" id="GO:0032991">
    <property type="term" value="C:protein-containing complex"/>
    <property type="evidence" value="ECO:0000266"/>
    <property type="project" value="RGD"/>
</dbReference>
<dbReference type="GO" id="GO:0005790">
    <property type="term" value="C:smooth endoplasmic reticulum"/>
    <property type="evidence" value="ECO:0000314"/>
    <property type="project" value="UniProtKB"/>
</dbReference>
<dbReference type="GO" id="GO:0005524">
    <property type="term" value="F:ATP binding"/>
    <property type="evidence" value="ECO:0000266"/>
    <property type="project" value="RGD"/>
</dbReference>
<dbReference type="GO" id="GO:0016887">
    <property type="term" value="F:ATP hydrolysis activity"/>
    <property type="evidence" value="ECO:0000250"/>
    <property type="project" value="UniProtKB"/>
</dbReference>
<dbReference type="GO" id="GO:0140662">
    <property type="term" value="F:ATP-dependent protein folding chaperone"/>
    <property type="evidence" value="ECO:0007669"/>
    <property type="project" value="InterPro"/>
</dbReference>
<dbReference type="GO" id="GO:0019899">
    <property type="term" value="F:enzyme binding"/>
    <property type="evidence" value="ECO:0000266"/>
    <property type="project" value="RGD"/>
</dbReference>
<dbReference type="GO" id="GO:0031072">
    <property type="term" value="F:heat shock protein binding"/>
    <property type="evidence" value="ECO:0000318"/>
    <property type="project" value="GO_Central"/>
</dbReference>
<dbReference type="GO" id="GO:0051787">
    <property type="term" value="F:misfolded protein binding"/>
    <property type="evidence" value="ECO:0000314"/>
    <property type="project" value="MGI"/>
</dbReference>
<dbReference type="GO" id="GO:0019904">
    <property type="term" value="F:protein domain specific binding"/>
    <property type="evidence" value="ECO:0000266"/>
    <property type="project" value="RGD"/>
</dbReference>
<dbReference type="GO" id="GO:0044183">
    <property type="term" value="F:protein folding chaperone"/>
    <property type="evidence" value="ECO:0000266"/>
    <property type="project" value="RGD"/>
</dbReference>
<dbReference type="GO" id="GO:0030291">
    <property type="term" value="F:protein serine/threonine kinase inhibitor activity"/>
    <property type="evidence" value="ECO:0000266"/>
    <property type="project" value="RGD"/>
</dbReference>
<dbReference type="GO" id="GO:0043022">
    <property type="term" value="F:ribosome binding"/>
    <property type="evidence" value="ECO:0000266"/>
    <property type="project" value="RGD"/>
</dbReference>
<dbReference type="GO" id="GO:0031625">
    <property type="term" value="F:ubiquitin protein ligase binding"/>
    <property type="evidence" value="ECO:0000266"/>
    <property type="project" value="RGD"/>
</dbReference>
<dbReference type="GO" id="GO:0051082">
    <property type="term" value="F:unfolded protein binding"/>
    <property type="evidence" value="ECO:0000353"/>
    <property type="project" value="RGD"/>
</dbReference>
<dbReference type="GO" id="GO:0071236">
    <property type="term" value="P:cellular response to antibiotic"/>
    <property type="evidence" value="ECO:0000270"/>
    <property type="project" value="RGD"/>
</dbReference>
<dbReference type="GO" id="GO:0071277">
    <property type="term" value="P:cellular response to calcium ion"/>
    <property type="evidence" value="ECO:0000270"/>
    <property type="project" value="RGD"/>
</dbReference>
<dbReference type="GO" id="GO:0071320">
    <property type="term" value="P:cellular response to cAMP"/>
    <property type="evidence" value="ECO:0000270"/>
    <property type="project" value="RGD"/>
</dbReference>
<dbReference type="GO" id="GO:0071480">
    <property type="term" value="P:cellular response to gamma radiation"/>
    <property type="evidence" value="ECO:0000270"/>
    <property type="project" value="RGD"/>
</dbReference>
<dbReference type="GO" id="GO:0042149">
    <property type="term" value="P:cellular response to glucose starvation"/>
    <property type="evidence" value="ECO:0000266"/>
    <property type="project" value="RGD"/>
</dbReference>
<dbReference type="GO" id="GO:0071353">
    <property type="term" value="P:cellular response to interleukin-4"/>
    <property type="evidence" value="ECO:0000266"/>
    <property type="project" value="RGD"/>
</dbReference>
<dbReference type="GO" id="GO:0071287">
    <property type="term" value="P:cellular response to manganese ion"/>
    <property type="evidence" value="ECO:0000270"/>
    <property type="project" value="ParkinsonsUK-UCL"/>
</dbReference>
<dbReference type="GO" id="GO:1990090">
    <property type="term" value="P:cellular response to nerve growth factor stimulus"/>
    <property type="evidence" value="ECO:0000270"/>
    <property type="project" value="RGD"/>
</dbReference>
<dbReference type="GO" id="GO:0071466">
    <property type="term" value="P:cellular response to xenobiotic stimulus"/>
    <property type="evidence" value="ECO:0000270"/>
    <property type="project" value="RGD"/>
</dbReference>
<dbReference type="GO" id="GO:0021680">
    <property type="term" value="P:cerebellar Purkinje cell layer development"/>
    <property type="evidence" value="ECO:0000266"/>
    <property type="project" value="RGD"/>
</dbReference>
<dbReference type="GO" id="GO:0021589">
    <property type="term" value="P:cerebellum structural organization"/>
    <property type="evidence" value="ECO:0000266"/>
    <property type="project" value="RGD"/>
</dbReference>
<dbReference type="GO" id="GO:0051085">
    <property type="term" value="P:chaperone cofactor-dependent protein refolding"/>
    <property type="evidence" value="ECO:0000318"/>
    <property type="project" value="GO_Central"/>
</dbReference>
<dbReference type="GO" id="GO:0030968">
    <property type="term" value="P:endoplasmic reticulum unfolded protein response"/>
    <property type="evidence" value="ECO:0000266"/>
    <property type="project" value="RGD"/>
</dbReference>
<dbReference type="GO" id="GO:0006983">
    <property type="term" value="P:ER overload response"/>
    <property type="evidence" value="ECO:0000266"/>
    <property type="project" value="RGD"/>
</dbReference>
<dbReference type="GO" id="GO:0036503">
    <property type="term" value="P:ERAD pathway"/>
    <property type="evidence" value="ECO:0000318"/>
    <property type="project" value="GO_Central"/>
</dbReference>
<dbReference type="GO" id="GO:0036498">
    <property type="term" value="P:IRE1-mediated unfolded protein response"/>
    <property type="evidence" value="ECO:0000266"/>
    <property type="project" value="RGD"/>
</dbReference>
<dbReference type="GO" id="GO:0001554">
    <property type="term" value="P:luteolysis"/>
    <property type="evidence" value="ECO:0000270"/>
    <property type="project" value="RGD"/>
</dbReference>
<dbReference type="GO" id="GO:0035437">
    <property type="term" value="P:maintenance of protein localization in endoplasmic reticulum"/>
    <property type="evidence" value="ECO:0000250"/>
    <property type="project" value="UniProtKB"/>
</dbReference>
<dbReference type="GO" id="GO:0043066">
    <property type="term" value="P:negative regulation of apoptotic process"/>
    <property type="evidence" value="ECO:0000266"/>
    <property type="project" value="RGD"/>
</dbReference>
<dbReference type="GO" id="GO:1903895">
    <property type="term" value="P:negative regulation of IRE1-mediated unfolded protein response"/>
    <property type="evidence" value="ECO:0000250"/>
    <property type="project" value="UniProtKB"/>
</dbReference>
<dbReference type="GO" id="GO:1903898">
    <property type="term" value="P:negative regulation of PERK-mediated unfolded protein response"/>
    <property type="evidence" value="ECO:0000266"/>
    <property type="project" value="RGD"/>
</dbReference>
<dbReference type="GO" id="GO:0031333">
    <property type="term" value="P:negative regulation of protein-containing complex assembly"/>
    <property type="evidence" value="ECO:0000250"/>
    <property type="project" value="UniProtKB"/>
</dbReference>
<dbReference type="GO" id="GO:0030512">
    <property type="term" value="P:negative regulation of transforming growth factor beta receptor signaling pathway"/>
    <property type="evidence" value="ECO:0000266"/>
    <property type="project" value="RGD"/>
</dbReference>
<dbReference type="GO" id="GO:0051402">
    <property type="term" value="P:neuron apoptotic process"/>
    <property type="evidence" value="ECO:0000270"/>
    <property type="project" value="RGD"/>
</dbReference>
<dbReference type="GO" id="GO:0030182">
    <property type="term" value="P:neuron differentiation"/>
    <property type="evidence" value="ECO:0000270"/>
    <property type="project" value="RGD"/>
</dbReference>
<dbReference type="GO" id="GO:0030335">
    <property type="term" value="P:positive regulation of cell migration"/>
    <property type="evidence" value="ECO:0000250"/>
    <property type="project" value="UniProtKB"/>
</dbReference>
<dbReference type="GO" id="GO:0010976">
    <property type="term" value="P:positive regulation of neuron projection development"/>
    <property type="evidence" value="ECO:0000315"/>
    <property type="project" value="RGD"/>
</dbReference>
<dbReference type="GO" id="GO:0031398">
    <property type="term" value="P:positive regulation of protein ubiquitination"/>
    <property type="evidence" value="ECO:0000266"/>
    <property type="project" value="RGD"/>
</dbReference>
<dbReference type="GO" id="GO:0031204">
    <property type="term" value="P:post-translational protein targeting to membrane, translocation"/>
    <property type="evidence" value="ECO:0000250"/>
    <property type="project" value="UniProtKB"/>
</dbReference>
<dbReference type="GO" id="GO:0042026">
    <property type="term" value="P:protein refolding"/>
    <property type="evidence" value="ECO:0000318"/>
    <property type="project" value="GO_Central"/>
</dbReference>
<dbReference type="GO" id="GO:0051603">
    <property type="term" value="P:proteolysis involved in protein catabolic process"/>
    <property type="evidence" value="ECO:0000266"/>
    <property type="project" value="RGD"/>
</dbReference>
<dbReference type="GO" id="GO:0042220">
    <property type="term" value="P:response to cocaine"/>
    <property type="evidence" value="ECO:0000270"/>
    <property type="project" value="RGD"/>
</dbReference>
<dbReference type="GO" id="GO:0034976">
    <property type="term" value="P:response to endoplasmic reticulum stress"/>
    <property type="evidence" value="ECO:0000314"/>
    <property type="project" value="MGI"/>
</dbReference>
<dbReference type="GO" id="GO:1904313">
    <property type="term" value="P:response to methamphetamine hydrochloride"/>
    <property type="evidence" value="ECO:0000270"/>
    <property type="project" value="RGD"/>
</dbReference>
<dbReference type="GO" id="GO:0097501">
    <property type="term" value="P:stress response to metal ion"/>
    <property type="evidence" value="ECO:0000270"/>
    <property type="project" value="RGD"/>
</dbReference>
<dbReference type="CDD" id="cd10241">
    <property type="entry name" value="ASKHA_NBD_HSP70_BiP"/>
    <property type="match status" value="1"/>
</dbReference>
<dbReference type="FunFam" id="3.30.420.40:FF:000720">
    <property type="entry name" value="Endoplasmic reticulum chaperone BiP"/>
    <property type="match status" value="1"/>
</dbReference>
<dbReference type="FunFam" id="3.90.640.10:FF:000153">
    <property type="entry name" value="Endoplasmic reticulum chaperone BiP"/>
    <property type="match status" value="1"/>
</dbReference>
<dbReference type="FunFam" id="2.60.34.10:FF:000002">
    <property type="entry name" value="Heat shock 70 kDa"/>
    <property type="match status" value="1"/>
</dbReference>
<dbReference type="FunFam" id="3.30.30.30:FF:000001">
    <property type="entry name" value="heat shock 70 kDa protein-like"/>
    <property type="match status" value="1"/>
</dbReference>
<dbReference type="FunFam" id="1.20.1270.10:FF:000061">
    <property type="entry name" value="Heat shock protein family A (Hsp70) member 5"/>
    <property type="match status" value="1"/>
</dbReference>
<dbReference type="Gene3D" id="1.20.1270.10">
    <property type="match status" value="1"/>
</dbReference>
<dbReference type="Gene3D" id="3.30.420.40">
    <property type="match status" value="2"/>
</dbReference>
<dbReference type="Gene3D" id="3.90.640.10">
    <property type="entry name" value="Actin, Chain A, domain 4"/>
    <property type="match status" value="1"/>
</dbReference>
<dbReference type="Gene3D" id="2.60.34.10">
    <property type="entry name" value="Substrate Binding Domain Of DNAk, Chain A, domain 1"/>
    <property type="match status" value="1"/>
</dbReference>
<dbReference type="InterPro" id="IPR043129">
    <property type="entry name" value="ATPase_NBD"/>
</dbReference>
<dbReference type="InterPro" id="IPR042050">
    <property type="entry name" value="BIP_NBD"/>
</dbReference>
<dbReference type="InterPro" id="IPR018181">
    <property type="entry name" value="Heat_shock_70_CS"/>
</dbReference>
<dbReference type="InterPro" id="IPR029048">
    <property type="entry name" value="HSP70_C_sf"/>
</dbReference>
<dbReference type="InterPro" id="IPR029047">
    <property type="entry name" value="HSP70_peptide-bd_sf"/>
</dbReference>
<dbReference type="InterPro" id="IPR013126">
    <property type="entry name" value="Hsp_70_fam"/>
</dbReference>
<dbReference type="NCBIfam" id="NF001413">
    <property type="entry name" value="PRK00290.1"/>
    <property type="match status" value="1"/>
</dbReference>
<dbReference type="PANTHER" id="PTHR19375">
    <property type="entry name" value="HEAT SHOCK PROTEIN 70KDA"/>
    <property type="match status" value="1"/>
</dbReference>
<dbReference type="Pfam" id="PF00012">
    <property type="entry name" value="HSP70"/>
    <property type="match status" value="1"/>
</dbReference>
<dbReference type="PRINTS" id="PR00301">
    <property type="entry name" value="HEATSHOCK70"/>
</dbReference>
<dbReference type="SUPFAM" id="SSF53067">
    <property type="entry name" value="Actin-like ATPase domain"/>
    <property type="match status" value="2"/>
</dbReference>
<dbReference type="SUPFAM" id="SSF100934">
    <property type="entry name" value="Heat shock protein 70kD (HSP70), C-terminal subdomain"/>
    <property type="match status" value="1"/>
</dbReference>
<dbReference type="SUPFAM" id="SSF100920">
    <property type="entry name" value="Heat shock protein 70kD (HSP70), peptide-binding domain"/>
    <property type="match status" value="1"/>
</dbReference>
<dbReference type="PROSITE" id="PS00014">
    <property type="entry name" value="ER_TARGET"/>
    <property type="match status" value="1"/>
</dbReference>
<dbReference type="PROSITE" id="PS00297">
    <property type="entry name" value="HSP70_1"/>
    <property type="match status" value="1"/>
</dbReference>
<dbReference type="PROSITE" id="PS00329">
    <property type="entry name" value="HSP70_2"/>
    <property type="match status" value="1"/>
</dbReference>
<dbReference type="PROSITE" id="PS01036">
    <property type="entry name" value="HSP70_3"/>
    <property type="match status" value="1"/>
</dbReference>
<gene>
    <name evidence="11" type="primary">Hspa5</name>
    <name evidence="4" type="synonym">Grp78</name>
</gene>
<sequence>MKFTVVAAALLLLCAVRAEEEDKKEDVGTVVGIDLGTTYSCVGVFKNGRVEIIANDQGNRITPSYVAFTPEGERLIGDAAKNQLTSNPENTVFDAKRLIGRTWNDPSVQQDIKFLPFKVVEKKTKPYIQVDIGGGQTKTFAPEEISAMVLTKMKETAEAYLGKKVTHAVVTVPAYFNDAQRQATKDAGTIAGLNVMRIINEPTAAAIAYGLDKREGEKNILVFDLGGGTFDVSLLTIDNGVFEVVATNGDTHLGGEDFDQRVMEHFIKLYKKKTGKDVRKDNRAVQKLRREVEKAKRALSSQHQARIEIESFFEGEDFSETLTRAKFEELNMDLFRSTMKPVQKVLEDSDLKKSDIDEIVLVGGSTRIPKIQQLVKEFFNGKEPSRGINPDEAVAYGAAVQAGVLSGDQDTGDLVLLDVCPLTLGIETVGGVMTKLIPRNTVVPTKKSQIFSTASDNQPTVTIKVYEGERPLTKDNHLLGTFDLTGIPPAPRGVPQIEVTFEIDVNGILRVTAEDKGTGNKNKITITNDQNRLTPEEIERMVNDAEKFAEEDKKLKERIDTRNELESYAYSLKNQIGDKEKLGGKLSPEDKETMEKAVEEKIEWLESHQDADIEDFKAKKKELEEIVQPIISKLYGSGGPPPTGEEDTSEKDEL</sequence>
<keyword id="KW-0007">Acetylation</keyword>
<keyword id="KW-0067">ATP-binding</keyword>
<keyword id="KW-0143">Chaperone</keyword>
<keyword id="KW-0963">Cytoplasm</keyword>
<keyword id="KW-0903">Direct protein sequencing</keyword>
<keyword id="KW-0256">Endoplasmic reticulum</keyword>
<keyword id="KW-0378">Hydrolase</keyword>
<keyword id="KW-1017">Isopeptide bond</keyword>
<keyword id="KW-0488">Methylation</keyword>
<keyword id="KW-0944">Nitration</keyword>
<keyword id="KW-0547">Nucleotide-binding</keyword>
<keyword id="KW-0597">Phosphoprotein</keyword>
<keyword id="KW-1185">Reference proteome</keyword>
<keyword id="KW-0732">Signal</keyword>
<keyword id="KW-0832">Ubl conjugation</keyword>
<evidence type="ECO:0000250" key="1"/>
<evidence type="ECO:0000250" key="2">
    <source>
        <dbReference type="UniProtKB" id="G3I8R9"/>
    </source>
</evidence>
<evidence type="ECO:0000250" key="3">
    <source>
        <dbReference type="UniProtKB" id="P0DMV8"/>
    </source>
</evidence>
<evidence type="ECO:0000250" key="4">
    <source>
        <dbReference type="UniProtKB" id="P11021"/>
    </source>
</evidence>
<evidence type="ECO:0000250" key="5">
    <source>
        <dbReference type="UniProtKB" id="P20029"/>
    </source>
</evidence>
<evidence type="ECO:0000256" key="6">
    <source>
        <dbReference type="SAM" id="MobiDB-lite"/>
    </source>
</evidence>
<evidence type="ECO:0000269" key="7">
    <source>
    </source>
</evidence>
<evidence type="ECO:0000269" key="8">
    <source>
    </source>
</evidence>
<evidence type="ECO:0000303" key="9">
    <source>
    </source>
</evidence>
<evidence type="ECO:0000305" key="10"/>
<evidence type="ECO:0000312" key="11">
    <source>
        <dbReference type="RGD" id="2843"/>
    </source>
</evidence>
<evidence type="ECO:0007744" key="12">
    <source>
    </source>
</evidence>
<proteinExistence type="evidence at protein level"/>